<name>RS2_MALP2</name>
<gene>
    <name evidence="1" type="primary">rpsB</name>
    <name type="ordered locus">MYPE9660</name>
</gene>
<protein>
    <recommendedName>
        <fullName evidence="1">Small ribosomal subunit protein uS2</fullName>
    </recommendedName>
    <alternativeName>
        <fullName evidence="3">30S ribosomal protein S2</fullName>
    </alternativeName>
</protein>
<dbReference type="EMBL" id="BA000026">
    <property type="protein sequence ID" value="BAC44752.1"/>
    <property type="molecule type" value="Genomic_DNA"/>
</dbReference>
<dbReference type="RefSeq" id="WP_011077781.1">
    <property type="nucleotide sequence ID" value="NC_004432.1"/>
</dbReference>
<dbReference type="SMR" id="Q8EUG1"/>
<dbReference type="FunCoup" id="Q8EUG1">
    <property type="interactions" value="255"/>
</dbReference>
<dbReference type="STRING" id="272633.gene:10732086"/>
<dbReference type="KEGG" id="mpe:MYPE9660"/>
<dbReference type="eggNOG" id="COG0052">
    <property type="taxonomic scope" value="Bacteria"/>
</dbReference>
<dbReference type="HOGENOM" id="CLU_040318_0_0_14"/>
<dbReference type="InParanoid" id="Q8EUG1"/>
<dbReference type="Proteomes" id="UP000002522">
    <property type="component" value="Chromosome"/>
</dbReference>
<dbReference type="GO" id="GO:0022627">
    <property type="term" value="C:cytosolic small ribosomal subunit"/>
    <property type="evidence" value="ECO:0007669"/>
    <property type="project" value="TreeGrafter"/>
</dbReference>
<dbReference type="GO" id="GO:0003735">
    <property type="term" value="F:structural constituent of ribosome"/>
    <property type="evidence" value="ECO:0007669"/>
    <property type="project" value="InterPro"/>
</dbReference>
<dbReference type="GO" id="GO:0006412">
    <property type="term" value="P:translation"/>
    <property type="evidence" value="ECO:0007669"/>
    <property type="project" value="UniProtKB-UniRule"/>
</dbReference>
<dbReference type="CDD" id="cd01425">
    <property type="entry name" value="RPS2"/>
    <property type="match status" value="1"/>
</dbReference>
<dbReference type="Gene3D" id="3.40.50.10490">
    <property type="entry name" value="Glucose-6-phosphate isomerase like protein, domain 1"/>
    <property type="match status" value="1"/>
</dbReference>
<dbReference type="Gene3D" id="1.10.287.610">
    <property type="entry name" value="Helix hairpin bin"/>
    <property type="match status" value="1"/>
</dbReference>
<dbReference type="HAMAP" id="MF_00291_B">
    <property type="entry name" value="Ribosomal_uS2_B"/>
    <property type="match status" value="1"/>
</dbReference>
<dbReference type="InterPro" id="IPR001865">
    <property type="entry name" value="Ribosomal_uS2"/>
</dbReference>
<dbReference type="InterPro" id="IPR005706">
    <property type="entry name" value="Ribosomal_uS2_bac/mit/plastid"/>
</dbReference>
<dbReference type="InterPro" id="IPR018130">
    <property type="entry name" value="Ribosomal_uS2_CS"/>
</dbReference>
<dbReference type="InterPro" id="IPR023591">
    <property type="entry name" value="Ribosomal_uS2_flav_dom_sf"/>
</dbReference>
<dbReference type="NCBIfam" id="TIGR01011">
    <property type="entry name" value="rpsB_bact"/>
    <property type="match status" value="1"/>
</dbReference>
<dbReference type="PANTHER" id="PTHR12534">
    <property type="entry name" value="30S RIBOSOMAL PROTEIN S2 PROKARYOTIC AND ORGANELLAR"/>
    <property type="match status" value="1"/>
</dbReference>
<dbReference type="PANTHER" id="PTHR12534:SF0">
    <property type="entry name" value="SMALL RIBOSOMAL SUBUNIT PROTEIN US2M"/>
    <property type="match status" value="1"/>
</dbReference>
<dbReference type="Pfam" id="PF00318">
    <property type="entry name" value="Ribosomal_S2"/>
    <property type="match status" value="1"/>
</dbReference>
<dbReference type="PRINTS" id="PR00395">
    <property type="entry name" value="RIBOSOMALS2"/>
</dbReference>
<dbReference type="SUPFAM" id="SSF52313">
    <property type="entry name" value="Ribosomal protein S2"/>
    <property type="match status" value="1"/>
</dbReference>
<dbReference type="PROSITE" id="PS00962">
    <property type="entry name" value="RIBOSOMAL_S2_1"/>
    <property type="match status" value="1"/>
</dbReference>
<dbReference type="PROSITE" id="PS00963">
    <property type="entry name" value="RIBOSOMAL_S2_2"/>
    <property type="match status" value="1"/>
</dbReference>
<reference key="1">
    <citation type="journal article" date="2002" name="Nucleic Acids Res.">
        <title>The complete genomic sequence of Mycoplasma penetrans, an intracellular bacterial pathogen in humans.</title>
        <authorList>
            <person name="Sasaki Y."/>
            <person name="Ishikawa J."/>
            <person name="Yamashita A."/>
            <person name="Oshima K."/>
            <person name="Kenri T."/>
            <person name="Furuya K."/>
            <person name="Yoshino C."/>
            <person name="Horino A."/>
            <person name="Shiba T."/>
            <person name="Sasaki T."/>
            <person name="Hattori M."/>
        </authorList>
    </citation>
    <scope>NUCLEOTIDE SEQUENCE [LARGE SCALE GENOMIC DNA]</scope>
    <source>
        <strain>HF-2</strain>
    </source>
</reference>
<keyword id="KW-1185">Reference proteome</keyword>
<keyword id="KW-0687">Ribonucleoprotein</keyword>
<keyword id="KW-0689">Ribosomal protein</keyword>
<sequence length="367" mass="41085">MPKKAEAKTGSSSKTTKRTVAKKDVKAEVNETNKTAEKVSSKKVNKTANSVDTNESSSNSTPSTGSKFELSSFKEKVAEIENNILQKIKENPTITGKPFRKLVSVNKLMETGAHIGLTTRKWNPKMKKFIYTKKGNNHIIDLLHTVISLNVAYNFLLDLVKANSNSESSPVLIVGTRGKTIKNHVKEQAKRSHAFYINERWLGGTLTNFSTITKSVAKFNNLILIHKNGEINKYTKKEQVELKKKTEKYAKYFSGIRTMKELPKVIILTDPEINKIAIKEARNLGIPVIAICNTNANPDLVDYVIPANNHSIKSVYLLVGLLCDAVAEAKGLPKAFAEKKDEEILLPEVIKRKPENRRQNNHSFNKN</sequence>
<proteinExistence type="inferred from homology"/>
<comment type="similarity">
    <text evidence="1">Belongs to the universal ribosomal protein uS2 family.</text>
</comment>
<accession>Q8EUG1</accession>
<feature type="chain" id="PRO_0000352015" description="Small ribosomal subunit protein uS2">
    <location>
        <begin position="1"/>
        <end position="367"/>
    </location>
</feature>
<feature type="region of interest" description="Disordered" evidence="2">
    <location>
        <begin position="1"/>
        <end position="68"/>
    </location>
</feature>
<feature type="compositionally biased region" description="Basic and acidic residues" evidence="2">
    <location>
        <begin position="21"/>
        <end position="40"/>
    </location>
</feature>
<feature type="compositionally biased region" description="Low complexity" evidence="2">
    <location>
        <begin position="53"/>
        <end position="66"/>
    </location>
</feature>
<evidence type="ECO:0000255" key="1">
    <source>
        <dbReference type="HAMAP-Rule" id="MF_00291"/>
    </source>
</evidence>
<evidence type="ECO:0000256" key="2">
    <source>
        <dbReference type="SAM" id="MobiDB-lite"/>
    </source>
</evidence>
<evidence type="ECO:0000305" key="3"/>
<organism>
    <name type="scientific">Malacoplasma penetrans (strain HF-2)</name>
    <name type="common">Mycoplasma penetrans</name>
    <dbReference type="NCBI Taxonomy" id="272633"/>
    <lineage>
        <taxon>Bacteria</taxon>
        <taxon>Bacillati</taxon>
        <taxon>Mycoplasmatota</taxon>
        <taxon>Mycoplasmoidales</taxon>
        <taxon>Mycoplasmoidaceae</taxon>
        <taxon>Malacoplasma</taxon>
    </lineage>
</organism>